<comment type="subcellular location">
    <subcellularLocation>
        <location evidence="1">Cytoplasm</location>
    </subcellularLocation>
</comment>
<comment type="similarity">
    <text evidence="3">Belongs to the eukaryotic ribosomal protein eL29 family.</text>
</comment>
<organism>
    <name type="scientific">Tetrahymena thermophila</name>
    <dbReference type="NCBI Taxonomy" id="5911"/>
    <lineage>
        <taxon>Eukaryota</taxon>
        <taxon>Sar</taxon>
        <taxon>Alveolata</taxon>
        <taxon>Ciliophora</taxon>
        <taxon>Intramacronucleata</taxon>
        <taxon>Oligohymenophorea</taxon>
        <taxon>Hymenostomatida</taxon>
        <taxon>Tetrahymenina</taxon>
        <taxon>Tetrahymenidae</taxon>
        <taxon>Tetrahymena</taxon>
    </lineage>
</organism>
<name>RL29_TETTH</name>
<reference key="1">
    <citation type="submission" date="2006-03" db="EMBL/GenBank/DDBJ databases">
        <title>Tetrahymena thermophila EST sequencing.</title>
        <authorList>
            <person name="Coyne R."/>
            <person name="Pearlman R."/>
            <person name="Garg J."/>
            <person name="Eisen J.A."/>
        </authorList>
    </citation>
    <scope>NUCLEOTIDE SEQUENCE [LARGE SCALE MRNA]</scope>
    <source>
        <strain>CU428 X B2086</strain>
    </source>
</reference>
<dbReference type="EMBL" id="DY683780">
    <property type="status" value="NOT_ANNOTATED_CDS"/>
    <property type="molecule type" value="mRNA"/>
</dbReference>
<dbReference type="PDB" id="4V8P">
    <property type="method" value="X-ray"/>
    <property type="resolution" value="3.52 A"/>
    <property type="chains" value="AT/DT/FT/HT=1-66"/>
</dbReference>
<dbReference type="PDBsum" id="4V8P"/>
<dbReference type="SMR" id="P0DJ21"/>
<dbReference type="IntAct" id="P0DJ21">
    <property type="interactions" value="1"/>
</dbReference>
<dbReference type="GO" id="GO:0022625">
    <property type="term" value="C:cytosolic large ribosomal subunit"/>
    <property type="evidence" value="ECO:0007669"/>
    <property type="project" value="TreeGrafter"/>
</dbReference>
<dbReference type="GO" id="GO:0003735">
    <property type="term" value="F:structural constituent of ribosome"/>
    <property type="evidence" value="ECO:0007669"/>
    <property type="project" value="InterPro"/>
</dbReference>
<dbReference type="GO" id="GO:0002181">
    <property type="term" value="P:cytoplasmic translation"/>
    <property type="evidence" value="ECO:0007669"/>
    <property type="project" value="TreeGrafter"/>
</dbReference>
<dbReference type="Gene3D" id="6.10.140.1730">
    <property type="match status" value="1"/>
</dbReference>
<dbReference type="InterPro" id="IPR002673">
    <property type="entry name" value="Ribosomal_eL29"/>
</dbReference>
<dbReference type="PANTHER" id="PTHR12884">
    <property type="entry name" value="60S RIBOSOMAL PROTEIN L29"/>
    <property type="match status" value="1"/>
</dbReference>
<dbReference type="PANTHER" id="PTHR12884:SF0">
    <property type="entry name" value="60S RIBOSOMAL PROTEIN L29"/>
    <property type="match status" value="1"/>
</dbReference>
<dbReference type="Pfam" id="PF01779">
    <property type="entry name" value="Ribosomal_L29e"/>
    <property type="match status" value="1"/>
</dbReference>
<protein>
    <recommendedName>
        <fullName evidence="3">Large ribosomal subunit protein eL29</fullName>
    </recommendedName>
    <alternativeName>
        <fullName>60S ribosomal protein L29</fullName>
    </alternativeName>
</protein>
<sequence>MAKSKNSTNKNQISKSHRNGIKKPKDHRHISTKGVNPRFLRNRRRAIKNDPSIKKSKNLEKKVNKE</sequence>
<proteinExistence type="evidence at protein level"/>
<gene>
    <name type="primary">RPL29</name>
</gene>
<accession>P0DJ21</accession>
<feature type="chain" id="PRO_0000413513" description="Large ribosomal subunit protein eL29">
    <location>
        <begin position="1"/>
        <end position="66"/>
    </location>
</feature>
<feature type="region of interest" description="Disordered" evidence="2">
    <location>
        <begin position="1"/>
        <end position="66"/>
    </location>
</feature>
<feature type="compositionally biased region" description="Polar residues" evidence="2">
    <location>
        <begin position="1"/>
        <end position="14"/>
    </location>
</feature>
<feature type="compositionally biased region" description="Basic residues" evidence="2">
    <location>
        <begin position="15"/>
        <end position="31"/>
    </location>
</feature>
<feature type="compositionally biased region" description="Basic and acidic residues" evidence="2">
    <location>
        <begin position="47"/>
        <end position="66"/>
    </location>
</feature>
<keyword id="KW-0002">3D-structure</keyword>
<keyword id="KW-0963">Cytoplasm</keyword>
<keyword id="KW-0687">Ribonucleoprotein</keyword>
<keyword id="KW-0689">Ribosomal protein</keyword>
<evidence type="ECO:0000250" key="1"/>
<evidence type="ECO:0000256" key="2">
    <source>
        <dbReference type="SAM" id="MobiDB-lite"/>
    </source>
</evidence>
<evidence type="ECO:0000305" key="3"/>